<proteinExistence type="inferred from homology"/>
<dbReference type="EMBL" id="CP000800">
    <property type="protein sequence ID" value="ABV19003.1"/>
    <property type="molecule type" value="Genomic_DNA"/>
</dbReference>
<dbReference type="RefSeq" id="WP_000748502.1">
    <property type="nucleotide sequence ID" value="NC_009801.1"/>
</dbReference>
<dbReference type="SMR" id="A7ZTR6"/>
<dbReference type="GeneID" id="93778452"/>
<dbReference type="KEGG" id="ecw:EcE24377A_4220"/>
<dbReference type="HOGENOM" id="CLU_039613_39_2_6"/>
<dbReference type="Proteomes" id="UP000001122">
    <property type="component" value="Chromosome"/>
</dbReference>
<dbReference type="GO" id="GO:0003677">
    <property type="term" value="F:DNA binding"/>
    <property type="evidence" value="ECO:0007669"/>
    <property type="project" value="UniProtKB-KW"/>
</dbReference>
<dbReference type="GO" id="GO:0003700">
    <property type="term" value="F:DNA-binding transcription factor activity"/>
    <property type="evidence" value="ECO:0007669"/>
    <property type="project" value="UniProtKB-UniRule"/>
</dbReference>
<dbReference type="CDD" id="cd08417">
    <property type="entry name" value="PBP2_Nitroaromatics_like"/>
    <property type="match status" value="1"/>
</dbReference>
<dbReference type="FunFam" id="3.40.190.10:FF:000092">
    <property type="entry name" value="HTH-type transcriptional regulator YidZ"/>
    <property type="match status" value="1"/>
</dbReference>
<dbReference type="Gene3D" id="3.40.190.10">
    <property type="entry name" value="Periplasmic binding protein-like II"/>
    <property type="match status" value="2"/>
</dbReference>
<dbReference type="Gene3D" id="1.10.10.10">
    <property type="entry name" value="Winged helix-like DNA-binding domain superfamily/Winged helix DNA-binding domain"/>
    <property type="match status" value="1"/>
</dbReference>
<dbReference type="HAMAP" id="MF_01607">
    <property type="entry name" value="HTH_type_YidZ"/>
    <property type="match status" value="1"/>
</dbReference>
<dbReference type="InterPro" id="IPR050389">
    <property type="entry name" value="LysR-type_TF"/>
</dbReference>
<dbReference type="InterPro" id="IPR005119">
    <property type="entry name" value="LysR_subst-bd"/>
</dbReference>
<dbReference type="InterPro" id="IPR000847">
    <property type="entry name" value="Tscrpt_reg_HTH_LysR"/>
</dbReference>
<dbReference type="InterPro" id="IPR023746">
    <property type="entry name" value="Tscrpt_reg_YidZ"/>
</dbReference>
<dbReference type="InterPro" id="IPR036388">
    <property type="entry name" value="WH-like_DNA-bd_sf"/>
</dbReference>
<dbReference type="InterPro" id="IPR036390">
    <property type="entry name" value="WH_DNA-bd_sf"/>
</dbReference>
<dbReference type="InterPro" id="IPR037402">
    <property type="entry name" value="YidZ_PBP2"/>
</dbReference>
<dbReference type="NCBIfam" id="NF007581">
    <property type="entry name" value="PRK10216.1"/>
    <property type="match status" value="1"/>
</dbReference>
<dbReference type="PANTHER" id="PTHR30118">
    <property type="entry name" value="HTH-TYPE TRANSCRIPTIONAL REGULATOR LEUO-RELATED"/>
    <property type="match status" value="1"/>
</dbReference>
<dbReference type="PANTHER" id="PTHR30118:SF11">
    <property type="entry name" value="HTH-TYPE TRANSCRIPTIONAL REGULATOR YIDZ"/>
    <property type="match status" value="1"/>
</dbReference>
<dbReference type="Pfam" id="PF00126">
    <property type="entry name" value="HTH_1"/>
    <property type="match status" value="1"/>
</dbReference>
<dbReference type="Pfam" id="PF03466">
    <property type="entry name" value="LysR_substrate"/>
    <property type="match status" value="1"/>
</dbReference>
<dbReference type="SUPFAM" id="SSF53850">
    <property type="entry name" value="Periplasmic binding protein-like II"/>
    <property type="match status" value="1"/>
</dbReference>
<dbReference type="SUPFAM" id="SSF46785">
    <property type="entry name" value="Winged helix' DNA-binding domain"/>
    <property type="match status" value="1"/>
</dbReference>
<dbReference type="PROSITE" id="PS50931">
    <property type="entry name" value="HTH_LYSR"/>
    <property type="match status" value="1"/>
</dbReference>
<feature type="chain" id="PRO_1000069423" description="HTH-type transcriptional regulator YidZ">
    <location>
        <begin position="1"/>
        <end position="319"/>
    </location>
</feature>
<feature type="domain" description="HTH lysR-type" evidence="1">
    <location>
        <begin position="8"/>
        <end position="65"/>
    </location>
</feature>
<feature type="DNA-binding region" description="H-T-H motif" evidence="1">
    <location>
        <begin position="25"/>
        <end position="44"/>
    </location>
</feature>
<protein>
    <recommendedName>
        <fullName evidence="1">HTH-type transcriptional regulator YidZ</fullName>
    </recommendedName>
</protein>
<name>YIDZ_ECO24</name>
<comment type="function">
    <text evidence="1">Involved in anaerobic NO protection.</text>
</comment>
<comment type="similarity">
    <text evidence="2">Belongs to the LysR transcriptional regulatory family.</text>
</comment>
<evidence type="ECO:0000255" key="1">
    <source>
        <dbReference type="HAMAP-Rule" id="MF_01607"/>
    </source>
</evidence>
<evidence type="ECO:0000305" key="2"/>
<accession>A7ZTR6</accession>
<keyword id="KW-0238">DNA-binding</keyword>
<keyword id="KW-1185">Reference proteome</keyword>
<keyword id="KW-0804">Transcription</keyword>
<keyword id="KW-0805">Transcription regulation</keyword>
<sequence length="319" mass="36929">MKKSITTLDLNLLLCLQLLMQERSVTKAAKRMNVTPSAVSKSLAKLRAWFDDPLFVNSPLGLSPTPLMVSMEQNLAEWMQMSNLLLDKPHHQTPRGLKFELAAESPLMMIMLNALSKRIYQRYPQATIKLRNWDYDSLDAITRGEVDIGFSGRESHPRSRELLSSLPLAIDYEVLFSDVPCVWLRKDHPALHETWNLDTFLRYPHISICWEQSDTWALDNVLQELGRERTIAMSLPEFEQSLFMAAQPDNLLLATAPRYCQYYNQLHQLPLVALPLPFDESQQKKLEVPFTLLWHKRNSHNPKIVWLRETIKNLYASMA</sequence>
<gene>
    <name evidence="1" type="primary">yidZ</name>
    <name type="ordered locus">EcE24377A_4220</name>
</gene>
<reference key="1">
    <citation type="journal article" date="2008" name="J. Bacteriol.">
        <title>The pangenome structure of Escherichia coli: comparative genomic analysis of E. coli commensal and pathogenic isolates.</title>
        <authorList>
            <person name="Rasko D.A."/>
            <person name="Rosovitz M.J."/>
            <person name="Myers G.S.A."/>
            <person name="Mongodin E.F."/>
            <person name="Fricke W.F."/>
            <person name="Gajer P."/>
            <person name="Crabtree J."/>
            <person name="Sebaihia M."/>
            <person name="Thomson N.R."/>
            <person name="Chaudhuri R."/>
            <person name="Henderson I.R."/>
            <person name="Sperandio V."/>
            <person name="Ravel J."/>
        </authorList>
    </citation>
    <scope>NUCLEOTIDE SEQUENCE [LARGE SCALE GENOMIC DNA]</scope>
    <source>
        <strain>E24377A / ETEC</strain>
    </source>
</reference>
<organism>
    <name type="scientific">Escherichia coli O139:H28 (strain E24377A / ETEC)</name>
    <dbReference type="NCBI Taxonomy" id="331111"/>
    <lineage>
        <taxon>Bacteria</taxon>
        <taxon>Pseudomonadati</taxon>
        <taxon>Pseudomonadota</taxon>
        <taxon>Gammaproteobacteria</taxon>
        <taxon>Enterobacterales</taxon>
        <taxon>Enterobacteriaceae</taxon>
        <taxon>Escherichia</taxon>
    </lineage>
</organism>